<evidence type="ECO:0000255" key="1">
    <source>
        <dbReference type="HAMAP-Rule" id="MF_01011"/>
    </source>
</evidence>
<organism>
    <name type="scientific">Acinetobacter baumannii (strain SDF)</name>
    <dbReference type="NCBI Taxonomy" id="509170"/>
    <lineage>
        <taxon>Bacteria</taxon>
        <taxon>Pseudomonadati</taxon>
        <taxon>Pseudomonadota</taxon>
        <taxon>Gammaproteobacteria</taxon>
        <taxon>Moraxellales</taxon>
        <taxon>Moraxellaceae</taxon>
        <taxon>Acinetobacter</taxon>
        <taxon>Acinetobacter calcoaceticus/baumannii complex</taxon>
    </lineage>
</organism>
<reference key="1">
    <citation type="journal article" date="2008" name="PLoS ONE">
        <title>Comparative analysis of Acinetobacters: three genomes for three lifestyles.</title>
        <authorList>
            <person name="Vallenet D."/>
            <person name="Nordmann P."/>
            <person name="Barbe V."/>
            <person name="Poirel L."/>
            <person name="Mangenot S."/>
            <person name="Bataille E."/>
            <person name="Dossat C."/>
            <person name="Gas S."/>
            <person name="Kreimeyer A."/>
            <person name="Lenoble P."/>
            <person name="Oztas S."/>
            <person name="Poulain J."/>
            <person name="Segurens B."/>
            <person name="Robert C."/>
            <person name="Abergel C."/>
            <person name="Claverie J.-M."/>
            <person name="Raoult D."/>
            <person name="Medigue C."/>
            <person name="Weissenbach J."/>
            <person name="Cruveiller S."/>
        </authorList>
    </citation>
    <scope>NUCLEOTIDE SEQUENCE [LARGE SCALE GENOMIC DNA]</scope>
    <source>
        <strain>SDF</strain>
    </source>
</reference>
<keyword id="KW-0489">Methyltransferase</keyword>
<keyword id="KW-0949">S-adenosyl-L-methionine</keyword>
<keyword id="KW-0808">Transferase</keyword>
<keyword id="KW-0819">tRNA processing</keyword>
<name>TRMA_ACIBS</name>
<gene>
    <name evidence="1" type="primary">trmA</name>
    <name type="ordered locus">ABSDF2113</name>
</gene>
<proteinExistence type="inferred from homology"/>
<feature type="chain" id="PRO_0000388544" description="tRNA/tmRNA (uracil-C(5))-methyltransferase">
    <location>
        <begin position="1"/>
        <end position="361"/>
    </location>
</feature>
<feature type="active site" description="Nucleophile" evidence="1">
    <location>
        <position position="319"/>
    </location>
</feature>
<feature type="active site" description="Proton acceptor" evidence="1">
    <location>
        <position position="353"/>
    </location>
</feature>
<feature type="binding site" evidence="1">
    <location>
        <position position="183"/>
    </location>
    <ligand>
        <name>S-adenosyl-L-methionine</name>
        <dbReference type="ChEBI" id="CHEBI:59789"/>
    </ligand>
</feature>
<feature type="binding site" evidence="1">
    <location>
        <position position="211"/>
    </location>
    <ligand>
        <name>S-adenosyl-L-methionine</name>
        <dbReference type="ChEBI" id="CHEBI:59789"/>
    </ligand>
</feature>
<feature type="binding site" evidence="1">
    <location>
        <position position="216"/>
    </location>
    <ligand>
        <name>S-adenosyl-L-methionine</name>
        <dbReference type="ChEBI" id="CHEBI:59789"/>
    </ligand>
</feature>
<feature type="binding site" evidence="1">
    <location>
        <position position="232"/>
    </location>
    <ligand>
        <name>S-adenosyl-L-methionine</name>
        <dbReference type="ChEBI" id="CHEBI:59789"/>
    </ligand>
</feature>
<feature type="binding site" evidence="1">
    <location>
        <position position="294"/>
    </location>
    <ligand>
        <name>S-adenosyl-L-methionine</name>
        <dbReference type="ChEBI" id="CHEBI:59789"/>
    </ligand>
</feature>
<protein>
    <recommendedName>
        <fullName evidence="1">tRNA/tmRNA (uracil-C(5))-methyltransferase</fullName>
        <ecNumber evidence="1">2.1.1.-</ecNumber>
        <ecNumber evidence="1">2.1.1.35</ecNumber>
    </recommendedName>
    <alternativeName>
        <fullName evidence="1">tRNA (uracil(54)-C(5))-methyltransferase</fullName>
    </alternativeName>
    <alternativeName>
        <fullName evidence="1">tRNA(m5U54)-methyltransferase</fullName>
        <shortName evidence="1">RUMT</shortName>
    </alternativeName>
    <alternativeName>
        <fullName evidence="1">tmRNA (uracil(341)-C(5))-methyltransferase</fullName>
    </alternativeName>
</protein>
<sequence>MTSSYRQQLQAKIDRITTQFSEFTPPTLEVFESPEQHFRMRAEFRIWHTENDMFYAMFERNDDGKQKTVVRIDEFPIADKSINDLMPLLLAELKANSLLSQRLFEVDFLATLSGEMLVTLIYHRKLNQEWEQAAKALAEKLNIKIMGRSRGQKIVIGDDFVVEEFELLNRSFKYKQIESSFTQPNAQVCKKMLQWACDAAEGSKKHLLELYCGNGNFTLPLSLKFERVLATELAKSSVYAAQWNIEQNQIDNIQVARLSAEEFTQAYQGEREFRRLQEADIDIQSYDFGTVFVDPPRAGIDDETLKLLQGFERIIYISCNPDTLYENLKTLTQTHRVTKFALFDQFPYTHHVESGVLLEKI</sequence>
<accession>B0VR22</accession>
<dbReference type="EC" id="2.1.1.-" evidence="1"/>
<dbReference type="EC" id="2.1.1.35" evidence="1"/>
<dbReference type="EMBL" id="CU468230">
    <property type="protein sequence ID" value="CAP01441.1"/>
    <property type="molecule type" value="Genomic_DNA"/>
</dbReference>
<dbReference type="SMR" id="B0VR22"/>
<dbReference type="KEGG" id="abm:ABSDF2113"/>
<dbReference type="HOGENOM" id="CLU_043022_0_0_6"/>
<dbReference type="Proteomes" id="UP000001741">
    <property type="component" value="Chromosome"/>
</dbReference>
<dbReference type="GO" id="GO:0005829">
    <property type="term" value="C:cytosol"/>
    <property type="evidence" value="ECO:0007669"/>
    <property type="project" value="TreeGrafter"/>
</dbReference>
<dbReference type="GO" id="GO:0019843">
    <property type="term" value="F:rRNA binding"/>
    <property type="evidence" value="ECO:0007669"/>
    <property type="project" value="TreeGrafter"/>
</dbReference>
<dbReference type="GO" id="GO:0030697">
    <property type="term" value="F:tRNA (uracil(54)-C5)-methyltransferase activity, S-adenosyl methionine-dependent"/>
    <property type="evidence" value="ECO:0007669"/>
    <property type="project" value="UniProtKB-UniRule"/>
</dbReference>
<dbReference type="GO" id="GO:0000049">
    <property type="term" value="F:tRNA binding"/>
    <property type="evidence" value="ECO:0007669"/>
    <property type="project" value="TreeGrafter"/>
</dbReference>
<dbReference type="GO" id="GO:0030488">
    <property type="term" value="P:tRNA methylation"/>
    <property type="evidence" value="ECO:0007669"/>
    <property type="project" value="UniProtKB-UniRule"/>
</dbReference>
<dbReference type="CDD" id="cd02440">
    <property type="entry name" value="AdoMet_MTases"/>
    <property type="match status" value="1"/>
</dbReference>
<dbReference type="FunFam" id="2.40.50.1070:FF:000001">
    <property type="entry name" value="tRNA/tmRNA (uracil-C(5))-methyltransferase"/>
    <property type="match status" value="1"/>
</dbReference>
<dbReference type="FunFam" id="3.40.50.150:FF:000012">
    <property type="entry name" value="tRNA/tmRNA (uracil-C(5))-methyltransferase"/>
    <property type="match status" value="1"/>
</dbReference>
<dbReference type="Gene3D" id="2.40.50.1070">
    <property type="match status" value="1"/>
</dbReference>
<dbReference type="Gene3D" id="3.40.50.150">
    <property type="entry name" value="Vaccinia Virus protein VP39"/>
    <property type="match status" value="1"/>
</dbReference>
<dbReference type="HAMAP" id="MF_01011">
    <property type="entry name" value="RNA_methyltr_TrmA"/>
    <property type="match status" value="1"/>
</dbReference>
<dbReference type="InterPro" id="IPR030390">
    <property type="entry name" value="MeTrfase_TrmA_AS"/>
</dbReference>
<dbReference type="InterPro" id="IPR030391">
    <property type="entry name" value="MeTrfase_TrmA_CS"/>
</dbReference>
<dbReference type="InterPro" id="IPR029063">
    <property type="entry name" value="SAM-dependent_MTases_sf"/>
</dbReference>
<dbReference type="InterPro" id="IPR011869">
    <property type="entry name" value="TrmA_MeTrfase"/>
</dbReference>
<dbReference type="InterPro" id="IPR010280">
    <property type="entry name" value="U5_MeTrfase_fam"/>
</dbReference>
<dbReference type="NCBIfam" id="TIGR02143">
    <property type="entry name" value="trmA_only"/>
    <property type="match status" value="1"/>
</dbReference>
<dbReference type="PANTHER" id="PTHR47790">
    <property type="entry name" value="TRNA/TMRNA (URACIL-C(5))-METHYLTRANSFERASE"/>
    <property type="match status" value="1"/>
</dbReference>
<dbReference type="PANTHER" id="PTHR47790:SF2">
    <property type="entry name" value="TRNA_TMRNA (URACIL-C(5))-METHYLTRANSFERASE"/>
    <property type="match status" value="1"/>
</dbReference>
<dbReference type="Pfam" id="PF05958">
    <property type="entry name" value="tRNA_U5-meth_tr"/>
    <property type="match status" value="1"/>
</dbReference>
<dbReference type="SUPFAM" id="SSF53335">
    <property type="entry name" value="S-adenosyl-L-methionine-dependent methyltransferases"/>
    <property type="match status" value="1"/>
</dbReference>
<dbReference type="PROSITE" id="PS51687">
    <property type="entry name" value="SAM_MT_RNA_M5U"/>
    <property type="match status" value="1"/>
</dbReference>
<dbReference type="PROSITE" id="PS01230">
    <property type="entry name" value="TRMA_1"/>
    <property type="match status" value="1"/>
</dbReference>
<dbReference type="PROSITE" id="PS01231">
    <property type="entry name" value="TRMA_2"/>
    <property type="match status" value="1"/>
</dbReference>
<comment type="function">
    <text evidence="1">Dual-specificity methyltransferase that catalyzes the formation of 5-methyluridine at position 54 (m5U54) in all tRNAs, and that of position 341 (m5U341) in tmRNA (transfer-mRNA).</text>
</comment>
<comment type="catalytic activity">
    <reaction evidence="1">
        <text>uridine(54) in tRNA + S-adenosyl-L-methionine = 5-methyluridine(54) in tRNA + S-adenosyl-L-homocysteine + H(+)</text>
        <dbReference type="Rhea" id="RHEA:42712"/>
        <dbReference type="Rhea" id="RHEA-COMP:10167"/>
        <dbReference type="Rhea" id="RHEA-COMP:10193"/>
        <dbReference type="ChEBI" id="CHEBI:15378"/>
        <dbReference type="ChEBI" id="CHEBI:57856"/>
        <dbReference type="ChEBI" id="CHEBI:59789"/>
        <dbReference type="ChEBI" id="CHEBI:65315"/>
        <dbReference type="ChEBI" id="CHEBI:74447"/>
        <dbReference type="EC" id="2.1.1.35"/>
    </reaction>
</comment>
<comment type="catalytic activity">
    <reaction evidence="1">
        <text>uridine(341) in tmRNA + S-adenosyl-L-methionine = 5-methyluridine(341) in tmRNA + S-adenosyl-L-homocysteine + H(+)</text>
        <dbReference type="Rhea" id="RHEA:43612"/>
        <dbReference type="Rhea" id="RHEA-COMP:10630"/>
        <dbReference type="Rhea" id="RHEA-COMP:10631"/>
        <dbReference type="ChEBI" id="CHEBI:15378"/>
        <dbReference type="ChEBI" id="CHEBI:57856"/>
        <dbReference type="ChEBI" id="CHEBI:59789"/>
        <dbReference type="ChEBI" id="CHEBI:65315"/>
        <dbReference type="ChEBI" id="CHEBI:74447"/>
    </reaction>
</comment>
<comment type="similarity">
    <text evidence="1">Belongs to the class I-like SAM-binding methyltransferase superfamily. RNA M5U methyltransferase family. TrmA subfamily.</text>
</comment>